<feature type="chain" id="PRO_0000095342" description="Tyrosine recombinase XerC">
    <location>
        <begin position="1"/>
        <end position="353"/>
    </location>
</feature>
<feature type="domain" description="Core-binding (CB)" evidence="3">
    <location>
        <begin position="40"/>
        <end position="145"/>
    </location>
</feature>
<feature type="domain" description="Tyr recombinase" evidence="2">
    <location>
        <begin position="167"/>
        <end position="346"/>
    </location>
</feature>
<feature type="active site" evidence="2">
    <location>
        <position position="205"/>
    </location>
</feature>
<feature type="active site" evidence="2">
    <location>
        <position position="227"/>
    </location>
</feature>
<feature type="active site" evidence="2">
    <location>
        <position position="297"/>
    </location>
</feature>
<feature type="active site" evidence="2">
    <location>
        <position position="300"/>
    </location>
</feature>
<feature type="active site" evidence="2">
    <location>
        <position position="324"/>
    </location>
</feature>
<feature type="active site" description="O-(3'-phospho-DNA)-tyrosine intermediate" evidence="2">
    <location>
        <position position="333"/>
    </location>
</feature>
<gene>
    <name type="primary">xerC</name>
    <name type="ordered locus">TTE1363</name>
</gene>
<evidence type="ECO:0000250" key="1">
    <source>
        <dbReference type="UniProtKB" id="P0A8P8"/>
    </source>
</evidence>
<evidence type="ECO:0000255" key="2">
    <source>
        <dbReference type="PROSITE-ProRule" id="PRU01246"/>
    </source>
</evidence>
<evidence type="ECO:0000255" key="3">
    <source>
        <dbReference type="PROSITE-ProRule" id="PRU01248"/>
    </source>
</evidence>
<evidence type="ECO:0000305" key="4"/>
<reference key="1">
    <citation type="journal article" date="2002" name="Genome Res.">
        <title>A complete sequence of the T. tengcongensis genome.</title>
        <authorList>
            <person name="Bao Q."/>
            <person name="Tian Y."/>
            <person name="Li W."/>
            <person name="Xu Z."/>
            <person name="Xuan Z."/>
            <person name="Hu S."/>
            <person name="Dong W."/>
            <person name="Yang J."/>
            <person name="Chen Y."/>
            <person name="Xue Y."/>
            <person name="Xu Y."/>
            <person name="Lai X."/>
            <person name="Huang L."/>
            <person name="Dong X."/>
            <person name="Ma Y."/>
            <person name="Ling L."/>
            <person name="Tan H."/>
            <person name="Chen R."/>
            <person name="Wang J."/>
            <person name="Yu J."/>
            <person name="Yang H."/>
        </authorList>
    </citation>
    <scope>NUCLEOTIDE SEQUENCE [LARGE SCALE GENOMIC DNA]</scope>
    <source>
        <strain>DSM 15242 / JCM 11007 / NBRC 100824 / MB4</strain>
    </source>
</reference>
<proteinExistence type="inferred from homology"/>
<keyword id="KW-0131">Cell cycle</keyword>
<keyword id="KW-0132">Cell division</keyword>
<keyword id="KW-0159">Chromosome partition</keyword>
<keyword id="KW-0963">Cytoplasm</keyword>
<keyword id="KW-0229">DNA integration</keyword>
<keyword id="KW-0233">DNA recombination</keyword>
<keyword id="KW-0238">DNA-binding</keyword>
<keyword id="KW-1185">Reference proteome</keyword>
<name>XERC_CALS4</name>
<dbReference type="EMBL" id="AE008691">
    <property type="protein sequence ID" value="AAM24585.1"/>
    <property type="molecule type" value="Genomic_DNA"/>
</dbReference>
<dbReference type="SMR" id="Q8RA66"/>
<dbReference type="STRING" id="273068.TTE1363"/>
<dbReference type="KEGG" id="tte:TTE1363"/>
<dbReference type="eggNOG" id="COG4974">
    <property type="taxonomic scope" value="Bacteria"/>
</dbReference>
<dbReference type="HOGENOM" id="CLU_027562_9_6_9"/>
<dbReference type="Proteomes" id="UP000000555">
    <property type="component" value="Chromosome"/>
</dbReference>
<dbReference type="GO" id="GO:0005737">
    <property type="term" value="C:cytoplasm"/>
    <property type="evidence" value="ECO:0007669"/>
    <property type="project" value="UniProtKB-SubCell"/>
</dbReference>
<dbReference type="GO" id="GO:0003677">
    <property type="term" value="F:DNA binding"/>
    <property type="evidence" value="ECO:0007669"/>
    <property type="project" value="UniProtKB-KW"/>
</dbReference>
<dbReference type="GO" id="GO:0051301">
    <property type="term" value="P:cell division"/>
    <property type="evidence" value="ECO:0007669"/>
    <property type="project" value="UniProtKB-KW"/>
</dbReference>
<dbReference type="GO" id="GO:0007059">
    <property type="term" value="P:chromosome segregation"/>
    <property type="evidence" value="ECO:0007669"/>
    <property type="project" value="UniProtKB-KW"/>
</dbReference>
<dbReference type="GO" id="GO:0015074">
    <property type="term" value="P:DNA integration"/>
    <property type="evidence" value="ECO:0007669"/>
    <property type="project" value="UniProtKB-KW"/>
</dbReference>
<dbReference type="GO" id="GO:0006310">
    <property type="term" value="P:DNA recombination"/>
    <property type="evidence" value="ECO:0007669"/>
    <property type="project" value="UniProtKB-KW"/>
</dbReference>
<dbReference type="Gene3D" id="1.10.150.130">
    <property type="match status" value="1"/>
</dbReference>
<dbReference type="Gene3D" id="1.10.443.10">
    <property type="entry name" value="Intergrase catalytic core"/>
    <property type="match status" value="1"/>
</dbReference>
<dbReference type="InterPro" id="IPR044068">
    <property type="entry name" value="CB"/>
</dbReference>
<dbReference type="InterPro" id="IPR011010">
    <property type="entry name" value="DNA_brk_join_enz"/>
</dbReference>
<dbReference type="InterPro" id="IPR013762">
    <property type="entry name" value="Integrase-like_cat_sf"/>
</dbReference>
<dbReference type="InterPro" id="IPR002104">
    <property type="entry name" value="Integrase_catalytic"/>
</dbReference>
<dbReference type="InterPro" id="IPR010998">
    <property type="entry name" value="Integrase_recombinase_N"/>
</dbReference>
<dbReference type="InterPro" id="IPR004107">
    <property type="entry name" value="Integrase_SAM-like_N"/>
</dbReference>
<dbReference type="InterPro" id="IPR050090">
    <property type="entry name" value="Tyrosine_recombinase_XerCD"/>
</dbReference>
<dbReference type="PANTHER" id="PTHR30349">
    <property type="entry name" value="PHAGE INTEGRASE-RELATED"/>
    <property type="match status" value="1"/>
</dbReference>
<dbReference type="PANTHER" id="PTHR30349:SF77">
    <property type="entry name" value="TYROSINE RECOMBINASE XERC"/>
    <property type="match status" value="1"/>
</dbReference>
<dbReference type="Pfam" id="PF02899">
    <property type="entry name" value="Phage_int_SAM_1"/>
    <property type="match status" value="1"/>
</dbReference>
<dbReference type="Pfam" id="PF00589">
    <property type="entry name" value="Phage_integrase"/>
    <property type="match status" value="1"/>
</dbReference>
<dbReference type="SUPFAM" id="SSF56349">
    <property type="entry name" value="DNA breaking-rejoining enzymes"/>
    <property type="match status" value="1"/>
</dbReference>
<dbReference type="PROSITE" id="PS51900">
    <property type="entry name" value="CB"/>
    <property type="match status" value="1"/>
</dbReference>
<dbReference type="PROSITE" id="PS51898">
    <property type="entry name" value="TYR_RECOMBINASE"/>
    <property type="match status" value="1"/>
</dbReference>
<protein>
    <recommendedName>
        <fullName evidence="4">Tyrosine recombinase XerC</fullName>
    </recommendedName>
</protein>
<organism>
    <name type="scientific">Caldanaerobacter subterraneus subsp. tengcongensis (strain DSM 15242 / JCM 11007 / NBRC 100824 / MB4)</name>
    <name type="common">Thermoanaerobacter tengcongensis</name>
    <dbReference type="NCBI Taxonomy" id="273068"/>
    <lineage>
        <taxon>Bacteria</taxon>
        <taxon>Bacillati</taxon>
        <taxon>Bacillota</taxon>
        <taxon>Clostridia</taxon>
        <taxon>Thermoanaerobacterales</taxon>
        <taxon>Thermoanaerobacteraceae</taxon>
        <taxon>Caldanaerobacter</taxon>
    </lineage>
</organism>
<sequence>MLDFSLFVWYHRLCNYTKYLFRIIRFWTIKRKELSFMEALKYPPILEEFLNYFSTVKARSPNTIKAYAYDLILFFRFLKKRRGKVSDDIPFDEIDISDVDIDLIESVDLNDLYAYLSFVTNERSNTPPARARKVASLRSFYNYLYRKAKVISKNPTQELESPKLSVRHPIYLTLEESKKLLNSIDGPFKERDYAIITLFLNCGLRVSELVNINLDDIKEDKLTVIGKGNKQRTIYLNEACIKAISDYLKVRPKEGVKDKKALFLSKRLKRISVKTVQYLVKKHLKHANLEGKKYSAHKLRHTAATLMYRYGNVDIRTLQKLLGHSNVSTTQIYTHVDDSQLREAVNKNPLSQE</sequence>
<comment type="function">
    <text evidence="1">Site-specific tyrosine recombinase, which acts by catalyzing the cutting and rejoining of the recombining DNA molecules.</text>
</comment>
<comment type="subcellular location">
    <subcellularLocation>
        <location evidence="4">Cytoplasm</location>
    </subcellularLocation>
</comment>
<comment type="similarity">
    <text evidence="4">Belongs to the 'phage' integrase family.</text>
</comment>
<accession>Q8RA66</accession>